<organism>
    <name type="scientific">Candida tropicalis (strain ATCC MYA-3404 / T1)</name>
    <name type="common">Yeast</name>
    <dbReference type="NCBI Taxonomy" id="294747"/>
    <lineage>
        <taxon>Eukaryota</taxon>
        <taxon>Fungi</taxon>
        <taxon>Dikarya</taxon>
        <taxon>Ascomycota</taxon>
        <taxon>Saccharomycotina</taxon>
        <taxon>Pichiomycetes</taxon>
        <taxon>Debaryomycetaceae</taxon>
        <taxon>Candida/Lodderomyces clade</taxon>
        <taxon>Candida</taxon>
    </lineage>
</organism>
<gene>
    <name type="primary">OCA5</name>
    <name type="ORF">CTRG_05620</name>
</gene>
<feature type="chain" id="PRO_0000408210" description="Oxidant-induced cell-cycle arrest protein 5">
    <location>
        <begin position="1"/>
        <end position="663"/>
    </location>
</feature>
<feature type="domain" description="Rab-GAP TBC" evidence="2">
    <location>
        <begin position="95"/>
        <end position="427"/>
    </location>
</feature>
<feature type="region of interest" description="Disordered" evidence="3">
    <location>
        <begin position="1"/>
        <end position="28"/>
    </location>
</feature>
<feature type="region of interest" description="Disordered" evidence="3">
    <location>
        <begin position="126"/>
        <end position="178"/>
    </location>
</feature>
<feature type="region of interest" description="Disordered" evidence="3">
    <location>
        <begin position="575"/>
        <end position="611"/>
    </location>
</feature>
<feature type="compositionally biased region" description="Low complexity" evidence="3">
    <location>
        <begin position="7"/>
        <end position="23"/>
    </location>
</feature>
<feature type="compositionally biased region" description="Low complexity" evidence="3">
    <location>
        <begin position="130"/>
        <end position="144"/>
    </location>
</feature>
<feature type="compositionally biased region" description="Basic and acidic residues" evidence="3">
    <location>
        <begin position="163"/>
        <end position="178"/>
    </location>
</feature>
<feature type="compositionally biased region" description="Low complexity" evidence="3">
    <location>
        <begin position="589"/>
        <end position="611"/>
    </location>
</feature>
<proteinExistence type="inferred from homology"/>
<evidence type="ECO:0000250" key="1"/>
<evidence type="ECO:0000255" key="2">
    <source>
        <dbReference type="PROSITE-ProRule" id="PRU00163"/>
    </source>
</evidence>
<evidence type="ECO:0000256" key="3">
    <source>
        <dbReference type="SAM" id="MobiDB-lite"/>
    </source>
</evidence>
<evidence type="ECO:0000305" key="4"/>
<reference key="1">
    <citation type="journal article" date="2009" name="Nature">
        <title>Evolution of pathogenicity and sexual reproduction in eight Candida genomes.</title>
        <authorList>
            <person name="Butler G."/>
            <person name="Rasmussen M.D."/>
            <person name="Lin M.F."/>
            <person name="Santos M.A.S."/>
            <person name="Sakthikumar S."/>
            <person name="Munro C.A."/>
            <person name="Rheinbay E."/>
            <person name="Grabherr M."/>
            <person name="Forche A."/>
            <person name="Reedy J.L."/>
            <person name="Agrafioti I."/>
            <person name="Arnaud M.B."/>
            <person name="Bates S."/>
            <person name="Brown A.J.P."/>
            <person name="Brunke S."/>
            <person name="Costanzo M.C."/>
            <person name="Fitzpatrick D.A."/>
            <person name="de Groot P.W.J."/>
            <person name="Harris D."/>
            <person name="Hoyer L.L."/>
            <person name="Hube B."/>
            <person name="Klis F.M."/>
            <person name="Kodira C."/>
            <person name="Lennard N."/>
            <person name="Logue M.E."/>
            <person name="Martin R."/>
            <person name="Neiman A.M."/>
            <person name="Nikolaou E."/>
            <person name="Quail M.A."/>
            <person name="Quinn J."/>
            <person name="Santos M.C."/>
            <person name="Schmitzberger F.F."/>
            <person name="Sherlock G."/>
            <person name="Shah P."/>
            <person name="Silverstein K.A.T."/>
            <person name="Skrzypek M.S."/>
            <person name="Soll D."/>
            <person name="Staggs R."/>
            <person name="Stansfield I."/>
            <person name="Stumpf M.P.H."/>
            <person name="Sudbery P.E."/>
            <person name="Srikantha T."/>
            <person name="Zeng Q."/>
            <person name="Berman J."/>
            <person name="Berriman M."/>
            <person name="Heitman J."/>
            <person name="Gow N.A.R."/>
            <person name="Lorenz M.C."/>
            <person name="Birren B.W."/>
            <person name="Kellis M."/>
            <person name="Cuomo C.A."/>
        </authorList>
    </citation>
    <scope>NUCLEOTIDE SEQUENCE [LARGE SCALE GENOMIC DNA]</scope>
    <source>
        <strain>ATCC MYA-3404 / T1</strain>
    </source>
</reference>
<protein>
    <recommendedName>
        <fullName>Oxidant-induced cell-cycle arrest protein 5</fullName>
    </recommendedName>
</protein>
<name>OCA5_CANTT</name>
<keyword id="KW-0963">Cytoplasm</keyword>
<keyword id="KW-1185">Reference proteome</keyword>
<sequence>MFENSAKESSMSSSRSSGSPDVSALVTPNNIEEVKEPELLKIIPPQGPPPSSSGSISLEDFKPSFNYDLEVFNLCKEYLNTRNHHGLALITRQKGIPPFLRFKVWPILLKSHPFVINPFIQPDQDLMKESSSSSTSSSTSTTGSPINSEHSSIKDGILNQGNDTREEPQPQPSDPHEEIRQKIKRDLGKYIQRLKYSQSKYTVSELEHQILSILEDSVLKFILKWGKIIKYDSSLTWVALNLAEWFPPIPKTPWVLVGRDYSTADSSLVINLMDDYSNYIDNIPDLKSYLENLIYNDEKISNMSFREVFERLVLVLLHCPEPESRRKKSEVSKHASDLDHSHVQSMKVNKTTLPKTGGTIEERVSYFIYCLRKLLPELSQYFHEEQILTKFGCLDDEWLIWWLKFCGTKVWSKYDRGRIWDFMLGWRLKNPRRDFNYYYEKLNYVNRNTLEKLGPDIFWSVGSEDNNNVERFKNNQGLTRDKKTSSFKDLINDLHNDLHISKKVSTSPGVRNTSHSSILDSSPNFSIPFSRVDPHIALIFISLSLLKSKENTLVELDQHEIRQYLSRLPTKSYKYKSKNKMNATQKRMSSSSNSSSNSTSPLGSPSNLNSNTDDPILLPTNRIIISNDSNFDSKHKVNFIDNIILESGELWRKWLWSEMIDDN</sequence>
<dbReference type="EMBL" id="GG692403">
    <property type="protein sequence ID" value="EER30624.1"/>
    <property type="molecule type" value="Genomic_DNA"/>
</dbReference>
<dbReference type="RefSeq" id="XP_002551322.1">
    <property type="nucleotide sequence ID" value="XM_002551276.1"/>
</dbReference>
<dbReference type="STRING" id="294747.C5MHS7"/>
<dbReference type="EnsemblFungi" id="CTRG_05620-t43_1">
    <property type="protein sequence ID" value="CTRG_05620-t43_1-p1"/>
    <property type="gene ID" value="CTRG_05620"/>
</dbReference>
<dbReference type="GeneID" id="8300833"/>
<dbReference type="KEGG" id="ctp:CTRG_05620"/>
<dbReference type="VEuPathDB" id="FungiDB:CTRG_05620"/>
<dbReference type="eggNOG" id="ENOG502QVXN">
    <property type="taxonomic scope" value="Eukaryota"/>
</dbReference>
<dbReference type="HOGENOM" id="CLU_028817_0_0_1"/>
<dbReference type="OrthoDB" id="27140at2759"/>
<dbReference type="Proteomes" id="UP000002037">
    <property type="component" value="Unassembled WGS sequence"/>
</dbReference>
<dbReference type="GO" id="GO:0005737">
    <property type="term" value="C:cytoplasm"/>
    <property type="evidence" value="ECO:0007669"/>
    <property type="project" value="UniProtKB-SubCell"/>
</dbReference>
<dbReference type="Gene3D" id="1.10.472.80">
    <property type="entry name" value="Ypt/Rab-GAP domain of gyp1p, domain 3"/>
    <property type="match status" value="1"/>
</dbReference>
<dbReference type="InterPro" id="IPR000195">
    <property type="entry name" value="Rab-GAP-TBC_dom"/>
</dbReference>
<dbReference type="InterPro" id="IPR035969">
    <property type="entry name" value="Rab-GAP_TBC_sf"/>
</dbReference>
<dbReference type="SUPFAM" id="SSF47923">
    <property type="entry name" value="Ypt/Rab-GAP domain of gyp1p"/>
    <property type="match status" value="1"/>
</dbReference>
<dbReference type="PROSITE" id="PS50086">
    <property type="entry name" value="TBC_RABGAP"/>
    <property type="match status" value="1"/>
</dbReference>
<comment type="subcellular location">
    <subcellularLocation>
        <location evidence="1">Cytoplasm</location>
    </subcellularLocation>
</comment>
<comment type="similarity">
    <text evidence="4">Belongs to the OCA5 family.</text>
</comment>
<accession>C5MHS7</accession>